<accession>Q89BP0</accession>
<dbReference type="EC" id="2.1.2.9" evidence="1"/>
<dbReference type="EMBL" id="BA000040">
    <property type="protein sequence ID" value="BAC53373.1"/>
    <property type="molecule type" value="Genomic_DNA"/>
</dbReference>
<dbReference type="RefSeq" id="NP_774748.1">
    <property type="nucleotide sequence ID" value="NC_004463.1"/>
</dbReference>
<dbReference type="RefSeq" id="WP_011090830.1">
    <property type="nucleotide sequence ID" value="NC_004463.1"/>
</dbReference>
<dbReference type="SMR" id="Q89BP0"/>
<dbReference type="FunCoup" id="Q89BP0">
    <property type="interactions" value="625"/>
</dbReference>
<dbReference type="STRING" id="224911.AAV28_38235"/>
<dbReference type="EnsemblBacteria" id="BAC53373">
    <property type="protein sequence ID" value="BAC53373"/>
    <property type="gene ID" value="BAC53373"/>
</dbReference>
<dbReference type="GeneID" id="46495019"/>
<dbReference type="KEGG" id="bja:bll8108"/>
<dbReference type="PATRIC" id="fig|224911.44.peg.8278"/>
<dbReference type="eggNOG" id="COG0223">
    <property type="taxonomic scope" value="Bacteria"/>
</dbReference>
<dbReference type="HOGENOM" id="CLU_033347_1_2_5"/>
<dbReference type="InParanoid" id="Q89BP0"/>
<dbReference type="OrthoDB" id="9802815at2"/>
<dbReference type="PhylomeDB" id="Q89BP0"/>
<dbReference type="Proteomes" id="UP000002526">
    <property type="component" value="Chromosome"/>
</dbReference>
<dbReference type="GO" id="GO:0005829">
    <property type="term" value="C:cytosol"/>
    <property type="evidence" value="ECO:0000318"/>
    <property type="project" value="GO_Central"/>
</dbReference>
<dbReference type="GO" id="GO:0004479">
    <property type="term" value="F:methionyl-tRNA formyltransferase activity"/>
    <property type="evidence" value="ECO:0000318"/>
    <property type="project" value="GO_Central"/>
</dbReference>
<dbReference type="GO" id="GO:0071951">
    <property type="term" value="P:conversion of methionyl-tRNA to N-formyl-methionyl-tRNA"/>
    <property type="evidence" value="ECO:0000318"/>
    <property type="project" value="GO_Central"/>
</dbReference>
<dbReference type="CDD" id="cd08646">
    <property type="entry name" value="FMT_core_Met-tRNA-FMT_N"/>
    <property type="match status" value="1"/>
</dbReference>
<dbReference type="CDD" id="cd08704">
    <property type="entry name" value="Met_tRNA_FMT_C"/>
    <property type="match status" value="1"/>
</dbReference>
<dbReference type="FunFam" id="3.40.50.12230:FF:000001">
    <property type="entry name" value="Methionyl-tRNA formyltransferase"/>
    <property type="match status" value="1"/>
</dbReference>
<dbReference type="Gene3D" id="3.40.50.12230">
    <property type="match status" value="1"/>
</dbReference>
<dbReference type="HAMAP" id="MF_00182">
    <property type="entry name" value="Formyl_trans"/>
    <property type="match status" value="1"/>
</dbReference>
<dbReference type="InterPro" id="IPR005794">
    <property type="entry name" value="Fmt"/>
</dbReference>
<dbReference type="InterPro" id="IPR005793">
    <property type="entry name" value="Formyl_trans_C"/>
</dbReference>
<dbReference type="InterPro" id="IPR002376">
    <property type="entry name" value="Formyl_transf_N"/>
</dbReference>
<dbReference type="InterPro" id="IPR036477">
    <property type="entry name" value="Formyl_transf_N_sf"/>
</dbReference>
<dbReference type="InterPro" id="IPR011034">
    <property type="entry name" value="Formyl_transferase-like_C_sf"/>
</dbReference>
<dbReference type="InterPro" id="IPR001555">
    <property type="entry name" value="GART_AS"/>
</dbReference>
<dbReference type="InterPro" id="IPR044135">
    <property type="entry name" value="Met-tRNA-FMT_C"/>
</dbReference>
<dbReference type="InterPro" id="IPR041711">
    <property type="entry name" value="Met-tRNA-FMT_N"/>
</dbReference>
<dbReference type="NCBIfam" id="TIGR00460">
    <property type="entry name" value="fmt"/>
    <property type="match status" value="1"/>
</dbReference>
<dbReference type="PANTHER" id="PTHR11138">
    <property type="entry name" value="METHIONYL-TRNA FORMYLTRANSFERASE"/>
    <property type="match status" value="1"/>
</dbReference>
<dbReference type="PANTHER" id="PTHR11138:SF5">
    <property type="entry name" value="METHIONYL-TRNA FORMYLTRANSFERASE, MITOCHONDRIAL"/>
    <property type="match status" value="1"/>
</dbReference>
<dbReference type="Pfam" id="PF02911">
    <property type="entry name" value="Formyl_trans_C"/>
    <property type="match status" value="1"/>
</dbReference>
<dbReference type="Pfam" id="PF00551">
    <property type="entry name" value="Formyl_trans_N"/>
    <property type="match status" value="1"/>
</dbReference>
<dbReference type="SUPFAM" id="SSF50486">
    <property type="entry name" value="FMT C-terminal domain-like"/>
    <property type="match status" value="1"/>
</dbReference>
<dbReference type="SUPFAM" id="SSF53328">
    <property type="entry name" value="Formyltransferase"/>
    <property type="match status" value="1"/>
</dbReference>
<dbReference type="PROSITE" id="PS00373">
    <property type="entry name" value="GART"/>
    <property type="match status" value="1"/>
</dbReference>
<name>FMT_BRADU</name>
<proteinExistence type="inferred from homology"/>
<comment type="function">
    <text evidence="1">Attaches a formyl group to the free amino group of methionyl-tRNA(fMet). The formyl group appears to play a dual role in the initiator identity of N-formylmethionyl-tRNA by promoting its recognition by IF2 and preventing the misappropriation of this tRNA by the elongation apparatus.</text>
</comment>
<comment type="catalytic activity">
    <reaction evidence="1">
        <text>L-methionyl-tRNA(fMet) + (6R)-10-formyltetrahydrofolate = N-formyl-L-methionyl-tRNA(fMet) + (6S)-5,6,7,8-tetrahydrofolate + H(+)</text>
        <dbReference type="Rhea" id="RHEA:24380"/>
        <dbReference type="Rhea" id="RHEA-COMP:9952"/>
        <dbReference type="Rhea" id="RHEA-COMP:9953"/>
        <dbReference type="ChEBI" id="CHEBI:15378"/>
        <dbReference type="ChEBI" id="CHEBI:57453"/>
        <dbReference type="ChEBI" id="CHEBI:78530"/>
        <dbReference type="ChEBI" id="CHEBI:78844"/>
        <dbReference type="ChEBI" id="CHEBI:195366"/>
        <dbReference type="EC" id="2.1.2.9"/>
    </reaction>
</comment>
<comment type="similarity">
    <text evidence="1">Belongs to the Fmt family.</text>
</comment>
<protein>
    <recommendedName>
        <fullName evidence="1">Methionyl-tRNA formyltransferase</fullName>
        <ecNumber evidence="1">2.1.2.9</ecNumber>
    </recommendedName>
</protein>
<gene>
    <name evidence="1" type="primary">fmt</name>
    <name type="ordered locus">bll8108</name>
</gene>
<keyword id="KW-0648">Protein biosynthesis</keyword>
<keyword id="KW-1185">Reference proteome</keyword>
<keyword id="KW-0808">Transferase</keyword>
<reference key="1">
    <citation type="journal article" date="2002" name="DNA Res.">
        <title>Complete genomic sequence of nitrogen-fixing symbiotic bacterium Bradyrhizobium japonicum USDA110.</title>
        <authorList>
            <person name="Kaneko T."/>
            <person name="Nakamura Y."/>
            <person name="Sato S."/>
            <person name="Minamisawa K."/>
            <person name="Uchiumi T."/>
            <person name="Sasamoto S."/>
            <person name="Watanabe A."/>
            <person name="Idesawa K."/>
            <person name="Iriguchi M."/>
            <person name="Kawashima K."/>
            <person name="Kohara M."/>
            <person name="Matsumoto M."/>
            <person name="Shimpo S."/>
            <person name="Tsuruoka H."/>
            <person name="Wada T."/>
            <person name="Yamada M."/>
            <person name="Tabata S."/>
        </authorList>
    </citation>
    <scope>NUCLEOTIDE SEQUENCE [LARGE SCALE GENOMIC DNA]</scope>
    <source>
        <strain>JCM 10833 / BCRC 13528 / IAM 13628 / NBRC 14792 / USDA 110</strain>
    </source>
</reference>
<sequence length="311" mass="33485">MPLRLIFMGTPDFSVPTLLELVAHGHEIVAVYTRAPKPGGRRGLQLQPTPVEEAARRLGVPVLTPKTLKTEEALEEFRAFDADAAVVVAYGMILPQAILDAPKLGCYNLHASLLPRWRGAAPINRAIMADDAESGVMVMKMDVGLDTGDVAMAERLAITDTMTAADLHDRLSRLGADLMVRAMAALDRGGLQLKKQSEDGVTYAAKIDKAEARIDWTKPARAVLRHIHGLSPFPGAWAELAGVSENARVKILRCELAKGSGAPGEVLDDQLTIACGEGAIRIIELQREGKARMQATDFLRGVPLKAGAKFT</sequence>
<organism>
    <name type="scientific">Bradyrhizobium diazoefficiens (strain JCM 10833 / BCRC 13528 / IAM 13628 / NBRC 14792 / USDA 110)</name>
    <dbReference type="NCBI Taxonomy" id="224911"/>
    <lineage>
        <taxon>Bacteria</taxon>
        <taxon>Pseudomonadati</taxon>
        <taxon>Pseudomonadota</taxon>
        <taxon>Alphaproteobacteria</taxon>
        <taxon>Hyphomicrobiales</taxon>
        <taxon>Nitrobacteraceae</taxon>
        <taxon>Bradyrhizobium</taxon>
    </lineage>
</organism>
<evidence type="ECO:0000255" key="1">
    <source>
        <dbReference type="HAMAP-Rule" id="MF_00182"/>
    </source>
</evidence>
<feature type="chain" id="PRO_0000082929" description="Methionyl-tRNA formyltransferase">
    <location>
        <begin position="1"/>
        <end position="311"/>
    </location>
</feature>
<feature type="binding site" evidence="1">
    <location>
        <begin position="112"/>
        <end position="115"/>
    </location>
    <ligand>
        <name>(6S)-5,6,7,8-tetrahydrofolate</name>
        <dbReference type="ChEBI" id="CHEBI:57453"/>
    </ligand>
</feature>